<dbReference type="EMBL" id="CU928164">
    <property type="protein sequence ID" value="CAR20718.1"/>
    <property type="molecule type" value="Genomic_DNA"/>
</dbReference>
<dbReference type="RefSeq" id="WP_000609663.1">
    <property type="nucleotide sequence ID" value="NC_011750.1"/>
</dbReference>
<dbReference type="RefSeq" id="YP_002410482.1">
    <property type="nucleotide sequence ID" value="NC_011750.1"/>
</dbReference>
<dbReference type="SMR" id="B7NTL2"/>
<dbReference type="STRING" id="585057.ECIAI39_4618"/>
<dbReference type="GeneID" id="75169672"/>
<dbReference type="KEGG" id="ect:ECIAI39_4618"/>
<dbReference type="PATRIC" id="fig|585057.6.peg.4767"/>
<dbReference type="HOGENOM" id="CLU_168367_0_0_6"/>
<dbReference type="Proteomes" id="UP000000749">
    <property type="component" value="Chromosome"/>
</dbReference>
<dbReference type="GO" id="GO:0045283">
    <property type="term" value="C:fumarate reductase complex"/>
    <property type="evidence" value="ECO:0007669"/>
    <property type="project" value="UniProtKB-UniRule"/>
</dbReference>
<dbReference type="GO" id="GO:0005886">
    <property type="term" value="C:plasma membrane"/>
    <property type="evidence" value="ECO:0007669"/>
    <property type="project" value="UniProtKB-SubCell"/>
</dbReference>
<dbReference type="GO" id="GO:0000104">
    <property type="term" value="F:succinate dehydrogenase activity"/>
    <property type="evidence" value="ECO:0007669"/>
    <property type="project" value="UniProtKB-UniRule"/>
</dbReference>
<dbReference type="GO" id="GO:0006106">
    <property type="term" value="P:fumarate metabolic process"/>
    <property type="evidence" value="ECO:0007669"/>
    <property type="project" value="InterPro"/>
</dbReference>
<dbReference type="CDD" id="cd00547">
    <property type="entry name" value="QFR_TypeD_subunitD"/>
    <property type="match status" value="1"/>
</dbReference>
<dbReference type="FunFam" id="1.20.1300.10:FF:000002">
    <property type="entry name" value="Fumarate reductase subunit D"/>
    <property type="match status" value="1"/>
</dbReference>
<dbReference type="Gene3D" id="1.20.1300.10">
    <property type="entry name" value="Fumarate reductase/succinate dehydrogenase, transmembrane subunit"/>
    <property type="match status" value="1"/>
</dbReference>
<dbReference type="HAMAP" id="MF_00709">
    <property type="entry name" value="Fumarate_red_D"/>
    <property type="match status" value="1"/>
</dbReference>
<dbReference type="InterPro" id="IPR003418">
    <property type="entry name" value="Fumarate_red_D"/>
</dbReference>
<dbReference type="InterPro" id="IPR034804">
    <property type="entry name" value="SQR/QFR_C/D"/>
</dbReference>
<dbReference type="NCBIfam" id="NF003977">
    <property type="entry name" value="PRK05470.1-1"/>
    <property type="match status" value="1"/>
</dbReference>
<dbReference type="Pfam" id="PF02313">
    <property type="entry name" value="Fumarate_red_D"/>
    <property type="match status" value="1"/>
</dbReference>
<dbReference type="PIRSF" id="PIRSF000179">
    <property type="entry name" value="FrdD"/>
    <property type="match status" value="1"/>
</dbReference>
<dbReference type="SUPFAM" id="SSF81343">
    <property type="entry name" value="Fumarate reductase respiratory complex transmembrane subunits"/>
    <property type="match status" value="1"/>
</dbReference>
<proteinExistence type="inferred from homology"/>
<accession>B7NTL2</accession>
<evidence type="ECO:0000255" key="1">
    <source>
        <dbReference type="HAMAP-Rule" id="MF_00709"/>
    </source>
</evidence>
<gene>
    <name evidence="1" type="primary">frdD</name>
    <name type="ordered locus">ECIAI39_4618</name>
</gene>
<reference key="1">
    <citation type="journal article" date="2009" name="PLoS Genet.">
        <title>Organised genome dynamics in the Escherichia coli species results in highly diverse adaptive paths.</title>
        <authorList>
            <person name="Touchon M."/>
            <person name="Hoede C."/>
            <person name="Tenaillon O."/>
            <person name="Barbe V."/>
            <person name="Baeriswyl S."/>
            <person name="Bidet P."/>
            <person name="Bingen E."/>
            <person name="Bonacorsi S."/>
            <person name="Bouchier C."/>
            <person name="Bouvet O."/>
            <person name="Calteau A."/>
            <person name="Chiapello H."/>
            <person name="Clermont O."/>
            <person name="Cruveiller S."/>
            <person name="Danchin A."/>
            <person name="Diard M."/>
            <person name="Dossat C."/>
            <person name="Karoui M.E."/>
            <person name="Frapy E."/>
            <person name="Garry L."/>
            <person name="Ghigo J.M."/>
            <person name="Gilles A.M."/>
            <person name="Johnson J."/>
            <person name="Le Bouguenec C."/>
            <person name="Lescat M."/>
            <person name="Mangenot S."/>
            <person name="Martinez-Jehanne V."/>
            <person name="Matic I."/>
            <person name="Nassif X."/>
            <person name="Oztas S."/>
            <person name="Petit M.A."/>
            <person name="Pichon C."/>
            <person name="Rouy Z."/>
            <person name="Ruf C.S."/>
            <person name="Schneider D."/>
            <person name="Tourret J."/>
            <person name="Vacherie B."/>
            <person name="Vallenet D."/>
            <person name="Medigue C."/>
            <person name="Rocha E.P.C."/>
            <person name="Denamur E."/>
        </authorList>
    </citation>
    <scope>NUCLEOTIDE SEQUENCE [LARGE SCALE GENOMIC DNA]</scope>
    <source>
        <strain>IAI39 / ExPEC</strain>
    </source>
</reference>
<keyword id="KW-0997">Cell inner membrane</keyword>
<keyword id="KW-1003">Cell membrane</keyword>
<keyword id="KW-0472">Membrane</keyword>
<keyword id="KW-0812">Transmembrane</keyword>
<keyword id="KW-1133">Transmembrane helix</keyword>
<organism>
    <name type="scientific">Escherichia coli O7:K1 (strain IAI39 / ExPEC)</name>
    <dbReference type="NCBI Taxonomy" id="585057"/>
    <lineage>
        <taxon>Bacteria</taxon>
        <taxon>Pseudomonadati</taxon>
        <taxon>Pseudomonadota</taxon>
        <taxon>Gammaproteobacteria</taxon>
        <taxon>Enterobacterales</taxon>
        <taxon>Enterobacteriaceae</taxon>
        <taxon>Escherichia</taxon>
    </lineage>
</organism>
<sequence>MINPNPKRSDEPVFWGLFGAGGMWSAIIAPVMILLVGILLPLGLFPGDALSYERVLAFAQSFIGRVFLFLMIVLPLWCGLHRMHHAMHDLKIHVPAGKWVFYGLAAILTVVTLIGVVTI</sequence>
<name>FRDD_ECO7I</name>
<comment type="function">
    <text evidence="1">Two distinct, membrane-bound, FAD-containing enzymes are responsible for the catalysis of fumarate and succinate interconversion; fumarate reductase is used in anaerobic growth, and succinate dehydrogenase is used in aerobic growth. Anchors the catalytic components of the fumarate reductase complex to the cell inner membrane, binds quinones.</text>
</comment>
<comment type="subunit">
    <text evidence="1">Part of an enzyme complex containing four subunits: a flavoprotein (FrdA), an iron-sulfur protein (FrdB), and two hydrophobic anchor proteins (FrdC and FrdD).</text>
</comment>
<comment type="subcellular location">
    <subcellularLocation>
        <location evidence="1">Cell inner membrane</location>
        <topology evidence="1">Multi-pass membrane protein</topology>
    </subcellularLocation>
</comment>
<comment type="similarity">
    <text evidence="1">Belongs to the FrdD family.</text>
</comment>
<protein>
    <recommendedName>
        <fullName evidence="1">Fumarate reductase subunit D</fullName>
    </recommendedName>
    <alternativeName>
        <fullName evidence="1">Fumarate reductase 13 kDa hydrophobic protein</fullName>
    </alternativeName>
    <alternativeName>
        <fullName evidence="1">Quinol-fumarate reductase subunit D</fullName>
        <shortName evidence="1">QFR subunit D</shortName>
    </alternativeName>
</protein>
<feature type="chain" id="PRO_1000132398" description="Fumarate reductase subunit D">
    <location>
        <begin position="1"/>
        <end position="119"/>
    </location>
</feature>
<feature type="transmembrane region" description="Helical" evidence="1">
    <location>
        <begin position="26"/>
        <end position="46"/>
    </location>
</feature>
<feature type="transmembrane region" description="Helical" evidence="1">
    <location>
        <begin position="55"/>
        <end position="75"/>
    </location>
</feature>
<feature type="transmembrane region" description="Helical" evidence="1">
    <location>
        <begin position="99"/>
        <end position="119"/>
    </location>
</feature>